<protein>
    <recommendedName>
        <fullName evidence="1">Proteasome subunit alpha</fullName>
    </recommendedName>
    <alternativeName>
        <fullName evidence="1">20S proteasome alpha subunit</fullName>
    </alternativeName>
    <alternativeName>
        <fullName evidence="1">Proteasome core protein PsmA</fullName>
    </alternativeName>
</protein>
<sequence length="241" mass="26535">MAFGPAAMGYDRAITIFSPDGSLYQVDYAFEAVKKGWTAIGIKSKSGVVIASEKRKAQSLLDVDSIEKVFLIDDHVGCSFAGLASDGRVLIDYARNIALQHRLIYDEPVSIDYLTKSVADVKQMYTQHGGVRPFGVALVIAGIDKSVPKLYMTEPSGQYMPYQAVAIGQGYYTATEFLEKNYKEDLTIEDTILLALKALSATLKPNEKLTPNTVEIGYASTQTGLFLKMTSEDKNMYLQKL</sequence>
<proteinExistence type="inferred from homology"/>
<reference key="1">
    <citation type="journal article" date="2009" name="Proc. Natl. Acad. Sci. U.S.A.">
        <title>Biogeography of the Sulfolobus islandicus pan-genome.</title>
        <authorList>
            <person name="Reno M.L."/>
            <person name="Held N.L."/>
            <person name="Fields C.J."/>
            <person name="Burke P.V."/>
            <person name="Whitaker R.J."/>
        </authorList>
    </citation>
    <scope>NUCLEOTIDE SEQUENCE [LARGE SCALE GENOMIC DNA]</scope>
    <source>
        <strain>M.14.25 / Kamchatka #1</strain>
    </source>
</reference>
<comment type="function">
    <text evidence="1">Component of the proteasome core, a large protease complex with broad specificity involved in protein degradation.</text>
</comment>
<comment type="activity regulation">
    <text evidence="1">The formation of the proteasomal ATPase PAN-20S proteasome complex, via the docking of the C-termini of PAN into the intersubunit pockets in the alpha-rings, triggers opening of the gate for substrate entry. Interconversion between the open-gate and close-gate conformations leads to a dynamic regulation of the 20S proteasome proteolysis activity.</text>
</comment>
<comment type="subunit">
    <text evidence="1">The 20S proteasome core is composed of 14 alpha and 14 beta subunits that assemble into four stacked heptameric rings, resulting in a barrel-shaped structure. The two inner rings, each composed of seven catalytic beta subunits, are sandwiched by two outer rings, each composed of seven alpha subunits. The catalytic chamber with the active sites is on the inside of the barrel. Has a gated structure, the ends of the cylinder being occluded by the N-termini of the alpha-subunits. Is capped at one or both ends by the proteasome regulatory ATPase, PAN.</text>
</comment>
<comment type="subcellular location">
    <subcellularLocation>
        <location evidence="1">Cytoplasm</location>
    </subcellularLocation>
</comment>
<comment type="similarity">
    <text evidence="1">Belongs to the peptidase T1A family.</text>
</comment>
<name>PSA_SACI4</name>
<evidence type="ECO:0000255" key="1">
    <source>
        <dbReference type="HAMAP-Rule" id="MF_00289"/>
    </source>
</evidence>
<dbReference type="EMBL" id="CP001400">
    <property type="protein sequence ID" value="ACP38156.1"/>
    <property type="molecule type" value="Genomic_DNA"/>
</dbReference>
<dbReference type="RefSeq" id="WP_012711401.1">
    <property type="nucleotide sequence ID" value="NC_012588.1"/>
</dbReference>
<dbReference type="SMR" id="C3MVG1"/>
<dbReference type="GeneID" id="84061723"/>
<dbReference type="KEGG" id="sia:M1425_1403"/>
<dbReference type="HOGENOM" id="CLU_035750_4_1_2"/>
<dbReference type="Proteomes" id="UP000001350">
    <property type="component" value="Chromosome"/>
</dbReference>
<dbReference type="GO" id="GO:0005737">
    <property type="term" value="C:cytoplasm"/>
    <property type="evidence" value="ECO:0007669"/>
    <property type="project" value="UniProtKB-SubCell"/>
</dbReference>
<dbReference type="GO" id="GO:0019773">
    <property type="term" value="C:proteasome core complex, alpha-subunit complex"/>
    <property type="evidence" value="ECO:0000250"/>
    <property type="project" value="UniProtKB"/>
</dbReference>
<dbReference type="GO" id="GO:0004298">
    <property type="term" value="F:threonine-type endopeptidase activity"/>
    <property type="evidence" value="ECO:0007669"/>
    <property type="project" value="InterPro"/>
</dbReference>
<dbReference type="GO" id="GO:0010498">
    <property type="term" value="P:proteasomal protein catabolic process"/>
    <property type="evidence" value="ECO:0007669"/>
    <property type="project" value="UniProtKB-UniRule"/>
</dbReference>
<dbReference type="GO" id="GO:0006511">
    <property type="term" value="P:ubiquitin-dependent protein catabolic process"/>
    <property type="evidence" value="ECO:0007669"/>
    <property type="project" value="InterPro"/>
</dbReference>
<dbReference type="CDD" id="cd03756">
    <property type="entry name" value="proteasome_alpha_archeal"/>
    <property type="match status" value="1"/>
</dbReference>
<dbReference type="FunFam" id="3.60.20.10:FF:000004">
    <property type="entry name" value="Proteasome subunit alpha type-4"/>
    <property type="match status" value="1"/>
</dbReference>
<dbReference type="Gene3D" id="3.60.20.10">
    <property type="entry name" value="Glutamine Phosphoribosylpyrophosphate, subunit 1, domain 1"/>
    <property type="match status" value="1"/>
</dbReference>
<dbReference type="HAMAP" id="MF_00289_A">
    <property type="entry name" value="Proteasome_A_A"/>
    <property type="match status" value="1"/>
</dbReference>
<dbReference type="InterPro" id="IPR029055">
    <property type="entry name" value="Ntn_hydrolases_N"/>
</dbReference>
<dbReference type="InterPro" id="IPR050115">
    <property type="entry name" value="Proteasome_alpha"/>
</dbReference>
<dbReference type="InterPro" id="IPR023332">
    <property type="entry name" value="Proteasome_alpha-type"/>
</dbReference>
<dbReference type="InterPro" id="IPR019982">
    <property type="entry name" value="Proteasome_asu_arc"/>
</dbReference>
<dbReference type="InterPro" id="IPR000426">
    <property type="entry name" value="Proteasome_asu_N"/>
</dbReference>
<dbReference type="InterPro" id="IPR001353">
    <property type="entry name" value="Proteasome_sua/b"/>
</dbReference>
<dbReference type="NCBIfam" id="TIGR03633">
    <property type="entry name" value="arc_protsome_A"/>
    <property type="match status" value="1"/>
</dbReference>
<dbReference type="NCBIfam" id="NF003075">
    <property type="entry name" value="PRK03996.1"/>
    <property type="match status" value="1"/>
</dbReference>
<dbReference type="PANTHER" id="PTHR11599">
    <property type="entry name" value="PROTEASOME SUBUNIT ALPHA/BETA"/>
    <property type="match status" value="1"/>
</dbReference>
<dbReference type="Pfam" id="PF00227">
    <property type="entry name" value="Proteasome"/>
    <property type="match status" value="1"/>
</dbReference>
<dbReference type="Pfam" id="PF10584">
    <property type="entry name" value="Proteasome_A_N"/>
    <property type="match status" value="1"/>
</dbReference>
<dbReference type="SMART" id="SM00948">
    <property type="entry name" value="Proteasome_A_N"/>
    <property type="match status" value="1"/>
</dbReference>
<dbReference type="SUPFAM" id="SSF56235">
    <property type="entry name" value="N-terminal nucleophile aminohydrolases (Ntn hydrolases)"/>
    <property type="match status" value="1"/>
</dbReference>
<dbReference type="PROSITE" id="PS00388">
    <property type="entry name" value="PROTEASOME_ALPHA_1"/>
    <property type="match status" value="1"/>
</dbReference>
<dbReference type="PROSITE" id="PS51475">
    <property type="entry name" value="PROTEASOME_ALPHA_2"/>
    <property type="match status" value="1"/>
</dbReference>
<gene>
    <name evidence="1" type="primary">psmA</name>
    <name type="ordered locus">M1425_1403</name>
</gene>
<feature type="chain" id="PRO_1000204862" description="Proteasome subunit alpha">
    <location>
        <begin position="1"/>
        <end position="241"/>
    </location>
</feature>
<accession>C3MVG1</accession>
<keyword id="KW-0963">Cytoplasm</keyword>
<keyword id="KW-0647">Proteasome</keyword>
<organism>
    <name type="scientific">Saccharolobus islandicus (strain M.14.25 / Kamchatka #1)</name>
    <name type="common">Sulfolobus islandicus</name>
    <dbReference type="NCBI Taxonomy" id="427317"/>
    <lineage>
        <taxon>Archaea</taxon>
        <taxon>Thermoproteota</taxon>
        <taxon>Thermoprotei</taxon>
        <taxon>Sulfolobales</taxon>
        <taxon>Sulfolobaceae</taxon>
        <taxon>Saccharolobus</taxon>
    </lineage>
</organism>